<sequence>MDLSNLKAAEGSVHSDNFRRGRGHGSGNGKTAGKGHKGQKARSGAPRPGFEGGQMPLYRRLPKRGFKNRNTLTIVPINLSALERFDNDAVVSVETLIEAGIVKNPRDGVKILGNGELTKKLTVQANAFSASAKEKIEALGGKAEVI</sequence>
<organism>
    <name type="scientific">Agathobacter rectalis (strain ATCC 33656 / DSM 3377 / JCM 17463 / KCTC 5835 / VPI 0990)</name>
    <name type="common">Eubacterium rectale</name>
    <dbReference type="NCBI Taxonomy" id="515619"/>
    <lineage>
        <taxon>Bacteria</taxon>
        <taxon>Bacillati</taxon>
        <taxon>Bacillota</taxon>
        <taxon>Clostridia</taxon>
        <taxon>Lachnospirales</taxon>
        <taxon>Lachnospiraceae</taxon>
        <taxon>Agathobacter</taxon>
    </lineage>
</organism>
<reference key="1">
    <citation type="journal article" date="2009" name="Proc. Natl. Acad. Sci. U.S.A.">
        <title>Characterizing a model human gut microbiota composed of members of its two dominant bacterial phyla.</title>
        <authorList>
            <person name="Mahowald M.A."/>
            <person name="Rey F.E."/>
            <person name="Seedorf H."/>
            <person name="Turnbaugh P.J."/>
            <person name="Fulton R.S."/>
            <person name="Wollam A."/>
            <person name="Shah N."/>
            <person name="Wang C."/>
            <person name="Magrini V."/>
            <person name="Wilson R.K."/>
            <person name="Cantarel B.L."/>
            <person name="Coutinho P.M."/>
            <person name="Henrissat B."/>
            <person name="Crock L.W."/>
            <person name="Russell A."/>
            <person name="Verberkmoes N.C."/>
            <person name="Hettich R.L."/>
            <person name="Gordon J.I."/>
        </authorList>
    </citation>
    <scope>NUCLEOTIDE SEQUENCE [LARGE SCALE GENOMIC DNA]</scope>
    <source>
        <strain>ATCC 33656 / DSM 3377 / JCM 17463 / KCTC 5835 / LMG 30912 / VPI 0990</strain>
    </source>
</reference>
<keyword id="KW-0687">Ribonucleoprotein</keyword>
<keyword id="KW-0689">Ribosomal protein</keyword>
<keyword id="KW-0694">RNA-binding</keyword>
<keyword id="KW-0699">rRNA-binding</keyword>
<proteinExistence type="inferred from homology"/>
<accession>C4ZBT7</accession>
<name>RL15_AGARV</name>
<protein>
    <recommendedName>
        <fullName evidence="1">Large ribosomal subunit protein uL15</fullName>
    </recommendedName>
    <alternativeName>
        <fullName evidence="3">50S ribosomal protein L15</fullName>
    </alternativeName>
</protein>
<comment type="function">
    <text evidence="1">Binds to the 23S rRNA.</text>
</comment>
<comment type="subunit">
    <text evidence="1">Part of the 50S ribosomal subunit.</text>
</comment>
<comment type="similarity">
    <text evidence="1">Belongs to the universal ribosomal protein uL15 family.</text>
</comment>
<feature type="chain" id="PRO_1000214704" description="Large ribosomal subunit protein uL15">
    <location>
        <begin position="1"/>
        <end position="146"/>
    </location>
</feature>
<feature type="region of interest" description="Disordered" evidence="2">
    <location>
        <begin position="1"/>
        <end position="57"/>
    </location>
</feature>
<dbReference type="EMBL" id="CP001107">
    <property type="protein sequence ID" value="ACR74227.1"/>
    <property type="molecule type" value="Genomic_DNA"/>
</dbReference>
<dbReference type="RefSeq" id="WP_012741344.1">
    <property type="nucleotide sequence ID" value="NZ_CAXSYD010000003.1"/>
</dbReference>
<dbReference type="SMR" id="C4ZBT7"/>
<dbReference type="STRING" id="515619.EUBREC_0436"/>
<dbReference type="PaxDb" id="515619-EUBREC_0436"/>
<dbReference type="GeneID" id="86987347"/>
<dbReference type="KEGG" id="ere:EUBREC_0436"/>
<dbReference type="HOGENOM" id="CLU_055188_4_2_9"/>
<dbReference type="Proteomes" id="UP000001477">
    <property type="component" value="Chromosome"/>
</dbReference>
<dbReference type="GO" id="GO:0022625">
    <property type="term" value="C:cytosolic large ribosomal subunit"/>
    <property type="evidence" value="ECO:0007669"/>
    <property type="project" value="TreeGrafter"/>
</dbReference>
<dbReference type="GO" id="GO:0019843">
    <property type="term" value="F:rRNA binding"/>
    <property type="evidence" value="ECO:0007669"/>
    <property type="project" value="UniProtKB-UniRule"/>
</dbReference>
<dbReference type="GO" id="GO:0003735">
    <property type="term" value="F:structural constituent of ribosome"/>
    <property type="evidence" value="ECO:0007669"/>
    <property type="project" value="InterPro"/>
</dbReference>
<dbReference type="GO" id="GO:0006412">
    <property type="term" value="P:translation"/>
    <property type="evidence" value="ECO:0007669"/>
    <property type="project" value="UniProtKB-UniRule"/>
</dbReference>
<dbReference type="Gene3D" id="3.100.10.10">
    <property type="match status" value="1"/>
</dbReference>
<dbReference type="HAMAP" id="MF_01341">
    <property type="entry name" value="Ribosomal_uL15"/>
    <property type="match status" value="1"/>
</dbReference>
<dbReference type="InterPro" id="IPR030878">
    <property type="entry name" value="Ribosomal_uL15"/>
</dbReference>
<dbReference type="InterPro" id="IPR021131">
    <property type="entry name" value="Ribosomal_uL15/eL18"/>
</dbReference>
<dbReference type="InterPro" id="IPR036227">
    <property type="entry name" value="Ribosomal_uL15/eL18_sf"/>
</dbReference>
<dbReference type="InterPro" id="IPR005749">
    <property type="entry name" value="Ribosomal_uL15_bac-type"/>
</dbReference>
<dbReference type="InterPro" id="IPR001196">
    <property type="entry name" value="Ribosomal_uL15_CS"/>
</dbReference>
<dbReference type="NCBIfam" id="TIGR01071">
    <property type="entry name" value="rplO_bact"/>
    <property type="match status" value="1"/>
</dbReference>
<dbReference type="PANTHER" id="PTHR12934">
    <property type="entry name" value="50S RIBOSOMAL PROTEIN L15"/>
    <property type="match status" value="1"/>
</dbReference>
<dbReference type="PANTHER" id="PTHR12934:SF11">
    <property type="entry name" value="LARGE RIBOSOMAL SUBUNIT PROTEIN UL15M"/>
    <property type="match status" value="1"/>
</dbReference>
<dbReference type="Pfam" id="PF00828">
    <property type="entry name" value="Ribosomal_L27A"/>
    <property type="match status" value="1"/>
</dbReference>
<dbReference type="SUPFAM" id="SSF52080">
    <property type="entry name" value="Ribosomal proteins L15p and L18e"/>
    <property type="match status" value="1"/>
</dbReference>
<dbReference type="PROSITE" id="PS00475">
    <property type="entry name" value="RIBOSOMAL_L15"/>
    <property type="match status" value="1"/>
</dbReference>
<gene>
    <name evidence="1" type="primary">rplO</name>
    <name type="ordered locus">EUBREC_0436</name>
</gene>
<evidence type="ECO:0000255" key="1">
    <source>
        <dbReference type="HAMAP-Rule" id="MF_01341"/>
    </source>
</evidence>
<evidence type="ECO:0000256" key="2">
    <source>
        <dbReference type="SAM" id="MobiDB-lite"/>
    </source>
</evidence>
<evidence type="ECO:0000305" key="3"/>